<dbReference type="EC" id="4.1.1.48" evidence="1"/>
<dbReference type="EMBL" id="CP000828">
    <property type="protein sequence ID" value="ABW29339.1"/>
    <property type="molecule type" value="Genomic_DNA"/>
</dbReference>
<dbReference type="RefSeq" id="WP_012164664.1">
    <property type="nucleotide sequence ID" value="NC_009925.1"/>
</dbReference>
<dbReference type="SMR" id="B0CEU2"/>
<dbReference type="STRING" id="329726.AM1_4360"/>
<dbReference type="KEGG" id="amr:AM1_4360"/>
<dbReference type="eggNOG" id="COG0134">
    <property type="taxonomic scope" value="Bacteria"/>
</dbReference>
<dbReference type="HOGENOM" id="CLU_034247_2_0_3"/>
<dbReference type="OrthoDB" id="9804217at2"/>
<dbReference type="UniPathway" id="UPA00035">
    <property type="reaction ID" value="UER00043"/>
</dbReference>
<dbReference type="Proteomes" id="UP000000268">
    <property type="component" value="Chromosome"/>
</dbReference>
<dbReference type="GO" id="GO:0004425">
    <property type="term" value="F:indole-3-glycerol-phosphate synthase activity"/>
    <property type="evidence" value="ECO:0007669"/>
    <property type="project" value="UniProtKB-UniRule"/>
</dbReference>
<dbReference type="GO" id="GO:0004640">
    <property type="term" value="F:phosphoribosylanthranilate isomerase activity"/>
    <property type="evidence" value="ECO:0007669"/>
    <property type="project" value="TreeGrafter"/>
</dbReference>
<dbReference type="GO" id="GO:0000162">
    <property type="term" value="P:L-tryptophan biosynthetic process"/>
    <property type="evidence" value="ECO:0007669"/>
    <property type="project" value="UniProtKB-UniRule"/>
</dbReference>
<dbReference type="CDD" id="cd00331">
    <property type="entry name" value="IGPS"/>
    <property type="match status" value="1"/>
</dbReference>
<dbReference type="FunFam" id="3.20.20.70:FF:000024">
    <property type="entry name" value="Indole-3-glycerol phosphate synthase"/>
    <property type="match status" value="1"/>
</dbReference>
<dbReference type="Gene3D" id="3.20.20.70">
    <property type="entry name" value="Aldolase class I"/>
    <property type="match status" value="1"/>
</dbReference>
<dbReference type="HAMAP" id="MF_00134_B">
    <property type="entry name" value="IGPS_B"/>
    <property type="match status" value="1"/>
</dbReference>
<dbReference type="InterPro" id="IPR013785">
    <property type="entry name" value="Aldolase_TIM"/>
</dbReference>
<dbReference type="InterPro" id="IPR045186">
    <property type="entry name" value="Indole-3-glycerol_P_synth"/>
</dbReference>
<dbReference type="InterPro" id="IPR013798">
    <property type="entry name" value="Indole-3-glycerol_P_synth_dom"/>
</dbReference>
<dbReference type="InterPro" id="IPR001468">
    <property type="entry name" value="Indole-3-GlycerolPSynthase_CS"/>
</dbReference>
<dbReference type="InterPro" id="IPR011060">
    <property type="entry name" value="RibuloseP-bd_barrel"/>
</dbReference>
<dbReference type="NCBIfam" id="NF001372">
    <property type="entry name" value="PRK00278.1-4"/>
    <property type="match status" value="1"/>
</dbReference>
<dbReference type="NCBIfam" id="NF001377">
    <property type="entry name" value="PRK00278.2-4"/>
    <property type="match status" value="1"/>
</dbReference>
<dbReference type="PANTHER" id="PTHR22854:SF2">
    <property type="entry name" value="INDOLE-3-GLYCEROL-PHOSPHATE SYNTHASE"/>
    <property type="match status" value="1"/>
</dbReference>
<dbReference type="PANTHER" id="PTHR22854">
    <property type="entry name" value="TRYPTOPHAN BIOSYNTHESIS PROTEIN"/>
    <property type="match status" value="1"/>
</dbReference>
<dbReference type="Pfam" id="PF00218">
    <property type="entry name" value="IGPS"/>
    <property type="match status" value="1"/>
</dbReference>
<dbReference type="SUPFAM" id="SSF51366">
    <property type="entry name" value="Ribulose-phoshate binding barrel"/>
    <property type="match status" value="1"/>
</dbReference>
<dbReference type="PROSITE" id="PS00614">
    <property type="entry name" value="IGPS"/>
    <property type="match status" value="1"/>
</dbReference>
<gene>
    <name evidence="1" type="primary">trpC</name>
    <name type="ordered locus">AM1_4360</name>
</gene>
<keyword id="KW-0028">Amino-acid biosynthesis</keyword>
<keyword id="KW-0057">Aromatic amino acid biosynthesis</keyword>
<keyword id="KW-0210">Decarboxylase</keyword>
<keyword id="KW-0456">Lyase</keyword>
<keyword id="KW-1185">Reference proteome</keyword>
<keyword id="KW-0822">Tryptophan biosynthesis</keyword>
<reference key="1">
    <citation type="journal article" date="2008" name="Proc. Natl. Acad. Sci. U.S.A.">
        <title>Niche adaptation and genome expansion in the chlorophyll d-producing cyanobacterium Acaryochloris marina.</title>
        <authorList>
            <person name="Swingley W.D."/>
            <person name="Chen M."/>
            <person name="Cheung P.C."/>
            <person name="Conrad A.L."/>
            <person name="Dejesa L.C."/>
            <person name="Hao J."/>
            <person name="Honchak B.M."/>
            <person name="Karbach L.E."/>
            <person name="Kurdoglu A."/>
            <person name="Lahiri S."/>
            <person name="Mastrian S.D."/>
            <person name="Miyashita H."/>
            <person name="Page L."/>
            <person name="Ramakrishna P."/>
            <person name="Satoh S."/>
            <person name="Sattley W.M."/>
            <person name="Shimada Y."/>
            <person name="Taylor H.L."/>
            <person name="Tomo T."/>
            <person name="Tsuchiya T."/>
            <person name="Wang Z.T."/>
            <person name="Raymond J."/>
            <person name="Mimuro M."/>
            <person name="Blankenship R.E."/>
            <person name="Touchman J.W."/>
        </authorList>
    </citation>
    <scope>NUCLEOTIDE SEQUENCE [LARGE SCALE GENOMIC DNA]</scope>
    <source>
        <strain>MBIC 11017</strain>
    </source>
</reference>
<comment type="catalytic activity">
    <reaction evidence="1">
        <text>1-(2-carboxyphenylamino)-1-deoxy-D-ribulose 5-phosphate + H(+) = (1S,2R)-1-C-(indol-3-yl)glycerol 3-phosphate + CO2 + H2O</text>
        <dbReference type="Rhea" id="RHEA:23476"/>
        <dbReference type="ChEBI" id="CHEBI:15377"/>
        <dbReference type="ChEBI" id="CHEBI:15378"/>
        <dbReference type="ChEBI" id="CHEBI:16526"/>
        <dbReference type="ChEBI" id="CHEBI:58613"/>
        <dbReference type="ChEBI" id="CHEBI:58866"/>
        <dbReference type="EC" id="4.1.1.48"/>
    </reaction>
</comment>
<comment type="pathway">
    <text evidence="1">Amino-acid biosynthesis; L-tryptophan biosynthesis; L-tryptophan from chorismate: step 4/5.</text>
</comment>
<comment type="similarity">
    <text evidence="1">Belongs to the TrpC family.</text>
</comment>
<sequence>MQIRRRPPSVAVNVQELQYQVKTPENEPRNILEKIVWFKETEVEQMRDSVSLLDLRKQVANCEPPLSFLDALKHGKTQPALIAEVKKASPSKGVLRENFDPVAIAQAYEAAGASCLSVLTDAEFFQGSFDYLQQIRAAVSLPLLCKEFVIYPYQIYLARSRGADAVLLIAAILSDQDLTYFLKIIKSLGMTALVEVHTLPELERVMDIPGIELIGINNRDLETFTVDLEVTCQLLAQQGTSLQDQDILVVSESGLHTSADLAQVKQAGAGAVLIGESLVKETGNASTHSETEQMQAKISALFS</sequence>
<organism>
    <name type="scientific">Acaryochloris marina (strain MBIC 11017)</name>
    <dbReference type="NCBI Taxonomy" id="329726"/>
    <lineage>
        <taxon>Bacteria</taxon>
        <taxon>Bacillati</taxon>
        <taxon>Cyanobacteriota</taxon>
        <taxon>Cyanophyceae</taxon>
        <taxon>Acaryochloridales</taxon>
        <taxon>Acaryochloridaceae</taxon>
        <taxon>Acaryochloris</taxon>
    </lineage>
</organism>
<accession>B0CEU2</accession>
<evidence type="ECO:0000255" key="1">
    <source>
        <dbReference type="HAMAP-Rule" id="MF_00134"/>
    </source>
</evidence>
<name>TRPC_ACAM1</name>
<proteinExistence type="inferred from homology"/>
<protein>
    <recommendedName>
        <fullName evidence="1">Indole-3-glycerol phosphate synthase</fullName>
        <shortName evidence="1">IGPS</shortName>
        <ecNumber evidence="1">4.1.1.48</ecNumber>
    </recommendedName>
</protein>
<feature type="chain" id="PRO_1000076413" description="Indole-3-glycerol phosphate synthase">
    <location>
        <begin position="1"/>
        <end position="303"/>
    </location>
</feature>